<proteinExistence type="inferred from homology"/>
<organism>
    <name type="scientific">Salmonella paratyphi A (strain AKU_12601)</name>
    <dbReference type="NCBI Taxonomy" id="554290"/>
    <lineage>
        <taxon>Bacteria</taxon>
        <taxon>Pseudomonadati</taxon>
        <taxon>Pseudomonadota</taxon>
        <taxon>Gammaproteobacteria</taxon>
        <taxon>Enterobacterales</taxon>
        <taxon>Enterobacteriaceae</taxon>
        <taxon>Salmonella</taxon>
    </lineage>
</organism>
<dbReference type="EMBL" id="FM200053">
    <property type="protein sequence ID" value="CAR60357.1"/>
    <property type="molecule type" value="Genomic_DNA"/>
</dbReference>
<dbReference type="RefSeq" id="WP_000801129.1">
    <property type="nucleotide sequence ID" value="NC_011147.1"/>
</dbReference>
<dbReference type="SMR" id="B5BDB4"/>
<dbReference type="GeneID" id="89550189"/>
<dbReference type="KEGG" id="sek:SSPA2147"/>
<dbReference type="HOGENOM" id="CLU_087843_4_1_6"/>
<dbReference type="Proteomes" id="UP000001869">
    <property type="component" value="Chromosome"/>
</dbReference>
<dbReference type="GO" id="GO:0005829">
    <property type="term" value="C:cytosol"/>
    <property type="evidence" value="ECO:0007669"/>
    <property type="project" value="TreeGrafter"/>
</dbReference>
<dbReference type="GO" id="GO:0003723">
    <property type="term" value="F:RNA binding"/>
    <property type="evidence" value="ECO:0007669"/>
    <property type="project" value="UniProtKB-UniRule"/>
</dbReference>
<dbReference type="GO" id="GO:0006353">
    <property type="term" value="P:DNA-templated transcription termination"/>
    <property type="evidence" value="ECO:0007669"/>
    <property type="project" value="UniProtKB-UniRule"/>
</dbReference>
<dbReference type="GO" id="GO:0031564">
    <property type="term" value="P:transcription antitermination"/>
    <property type="evidence" value="ECO:0007669"/>
    <property type="project" value="UniProtKB-KW"/>
</dbReference>
<dbReference type="CDD" id="cd00619">
    <property type="entry name" value="Terminator_NusB"/>
    <property type="match status" value="1"/>
</dbReference>
<dbReference type="FunFam" id="1.10.940.10:FF:000001">
    <property type="entry name" value="Transcription antitermination factor NusB"/>
    <property type="match status" value="1"/>
</dbReference>
<dbReference type="Gene3D" id="1.10.940.10">
    <property type="entry name" value="NusB-like"/>
    <property type="match status" value="1"/>
</dbReference>
<dbReference type="HAMAP" id="MF_00073">
    <property type="entry name" value="NusB"/>
    <property type="match status" value="1"/>
</dbReference>
<dbReference type="InterPro" id="IPR035926">
    <property type="entry name" value="NusB-like_sf"/>
</dbReference>
<dbReference type="InterPro" id="IPR011605">
    <property type="entry name" value="NusB_fam"/>
</dbReference>
<dbReference type="InterPro" id="IPR006027">
    <property type="entry name" value="NusB_RsmB_TIM44"/>
</dbReference>
<dbReference type="NCBIfam" id="TIGR01951">
    <property type="entry name" value="nusB"/>
    <property type="match status" value="1"/>
</dbReference>
<dbReference type="PANTHER" id="PTHR11078:SF3">
    <property type="entry name" value="ANTITERMINATION NUSB DOMAIN-CONTAINING PROTEIN"/>
    <property type="match status" value="1"/>
</dbReference>
<dbReference type="PANTHER" id="PTHR11078">
    <property type="entry name" value="N UTILIZATION SUBSTANCE PROTEIN B-RELATED"/>
    <property type="match status" value="1"/>
</dbReference>
<dbReference type="Pfam" id="PF01029">
    <property type="entry name" value="NusB"/>
    <property type="match status" value="1"/>
</dbReference>
<dbReference type="SUPFAM" id="SSF48013">
    <property type="entry name" value="NusB-like"/>
    <property type="match status" value="1"/>
</dbReference>
<keyword id="KW-0694">RNA-binding</keyword>
<keyword id="KW-0804">Transcription</keyword>
<keyword id="KW-0889">Transcription antitermination</keyword>
<keyword id="KW-0805">Transcription regulation</keyword>
<protein>
    <recommendedName>
        <fullName evidence="1">Transcription antitermination protein NusB</fullName>
    </recommendedName>
    <alternativeName>
        <fullName evidence="1">Antitermination factor NusB</fullName>
    </alternativeName>
</protein>
<feature type="chain" id="PRO_1000092585" description="Transcription antitermination protein NusB">
    <location>
        <begin position="1"/>
        <end position="139"/>
    </location>
</feature>
<name>NUSB_SALPK</name>
<gene>
    <name evidence="1" type="primary">nusB</name>
    <name type="ordered locus">SSPA2147</name>
</gene>
<sequence>MKPAARRRARECAVQALYSWQLSQNDIADVEYQFLAEQDVKDVDVLYFRELLSGVATNSAYLDGLMKPYLSRLLEELGQVEKAVLRIALFELSKRSDVPYKVAINEAIELAKTFGAEDSHKFVNGVLDKAAPVIRPNKK</sequence>
<reference key="1">
    <citation type="journal article" date="2009" name="BMC Genomics">
        <title>Pseudogene accumulation in the evolutionary histories of Salmonella enterica serovars Paratyphi A and Typhi.</title>
        <authorList>
            <person name="Holt K.E."/>
            <person name="Thomson N.R."/>
            <person name="Wain J."/>
            <person name="Langridge G.C."/>
            <person name="Hasan R."/>
            <person name="Bhutta Z.A."/>
            <person name="Quail M.A."/>
            <person name="Norbertczak H."/>
            <person name="Walker D."/>
            <person name="Simmonds M."/>
            <person name="White B."/>
            <person name="Bason N."/>
            <person name="Mungall K."/>
            <person name="Dougan G."/>
            <person name="Parkhill J."/>
        </authorList>
    </citation>
    <scope>NUCLEOTIDE SEQUENCE [LARGE SCALE GENOMIC DNA]</scope>
    <source>
        <strain>AKU_12601</strain>
    </source>
</reference>
<evidence type="ECO:0000255" key="1">
    <source>
        <dbReference type="HAMAP-Rule" id="MF_00073"/>
    </source>
</evidence>
<comment type="function">
    <text evidence="1">Involved in transcription antitermination. Required for transcription of ribosomal RNA (rRNA) genes. Binds specifically to the boxA antiterminator sequence of the ribosomal RNA (rrn) operons.</text>
</comment>
<comment type="similarity">
    <text evidence="1">Belongs to the NusB family.</text>
</comment>
<accession>B5BDB4</accession>